<reference key="1">
    <citation type="journal article" date="2001" name="Nature">
        <title>Genome sequence of enterohaemorrhagic Escherichia coli O157:H7.</title>
        <authorList>
            <person name="Perna N.T."/>
            <person name="Plunkett G. III"/>
            <person name="Burland V."/>
            <person name="Mau B."/>
            <person name="Glasner J.D."/>
            <person name="Rose D.J."/>
            <person name="Mayhew G.F."/>
            <person name="Evans P.S."/>
            <person name="Gregor J."/>
            <person name="Kirkpatrick H.A."/>
            <person name="Posfai G."/>
            <person name="Hackett J."/>
            <person name="Klink S."/>
            <person name="Boutin A."/>
            <person name="Shao Y."/>
            <person name="Miller L."/>
            <person name="Grotbeck E.J."/>
            <person name="Davis N.W."/>
            <person name="Lim A."/>
            <person name="Dimalanta E.T."/>
            <person name="Potamousis K."/>
            <person name="Apodaca J."/>
            <person name="Anantharaman T.S."/>
            <person name="Lin J."/>
            <person name="Yen G."/>
            <person name="Schwartz D.C."/>
            <person name="Welch R.A."/>
            <person name="Blattner F.R."/>
        </authorList>
    </citation>
    <scope>NUCLEOTIDE SEQUENCE [LARGE SCALE GENOMIC DNA]</scope>
    <source>
        <strain>O157:H7 / EDL933 / ATCC 700927 / EHEC</strain>
    </source>
</reference>
<reference key="2">
    <citation type="journal article" date="2001" name="DNA Res.">
        <title>Complete genome sequence of enterohemorrhagic Escherichia coli O157:H7 and genomic comparison with a laboratory strain K-12.</title>
        <authorList>
            <person name="Hayashi T."/>
            <person name="Makino K."/>
            <person name="Ohnishi M."/>
            <person name="Kurokawa K."/>
            <person name="Ishii K."/>
            <person name="Yokoyama K."/>
            <person name="Han C.-G."/>
            <person name="Ohtsubo E."/>
            <person name="Nakayama K."/>
            <person name="Murata T."/>
            <person name="Tanaka M."/>
            <person name="Tobe T."/>
            <person name="Iida T."/>
            <person name="Takami H."/>
            <person name="Honda T."/>
            <person name="Sasakawa C."/>
            <person name="Ogasawara N."/>
            <person name="Yasunaga T."/>
            <person name="Kuhara S."/>
            <person name="Shiba T."/>
            <person name="Hattori M."/>
            <person name="Shinagawa H."/>
        </authorList>
    </citation>
    <scope>NUCLEOTIDE SEQUENCE [LARGE SCALE GENOMIC DNA]</scope>
    <source>
        <strain>O157:H7 / Sakai / RIMD 0509952 / EHEC</strain>
    </source>
</reference>
<reference key="3">
    <citation type="journal article" date="2016" name="PLoS Pathog.">
        <title>A highly conserved bacterial D-serine uptake system links host metabolism and virulence.</title>
        <authorList>
            <person name="Connolly J.P."/>
            <person name="Gabrielsen M."/>
            <person name="Goldstone R.J."/>
            <person name="Grinter R."/>
            <person name="Wang D."/>
            <person name="Cogdell R.J."/>
            <person name="Walker D."/>
            <person name="Smith D.G."/>
            <person name="Roe A.J."/>
        </authorList>
    </citation>
    <scope>INDUCTION</scope>
    <scope>DISRUPTION PHENOTYPE</scope>
    <source>
        <strain>O157:H7 / EDL933 / ATCC 700927 / EHEC</strain>
    </source>
</reference>
<feature type="chain" id="PRO_0000214062" description="Pirin-like protein YhaK">
    <location>
        <begin position="1"/>
        <end position="233"/>
    </location>
</feature>
<name>YHAK_ECO57</name>
<comment type="function">
    <text evidence="1">Does not have quercetin 2,3-dioxygenase activity.</text>
</comment>
<comment type="subunit">
    <text evidence="1">Monomer.</text>
</comment>
<comment type="subcellular location">
    <subcellularLocation>
        <location evidence="1">Cytoplasm</location>
    </subcellularLocation>
</comment>
<comment type="induction">
    <text evidence="2">Induced under conditions that maximally induce expression of the large pathogenicity island (PAI) also called the locus of effacement (LEE).</text>
</comment>
<comment type="disruption phenotype">
    <text evidence="2">No effect on protein secretion by the type III secretion system (T3SS) encoded in the locus of effacement (LEE).</text>
</comment>
<comment type="similarity">
    <text evidence="3">Belongs to the pirin family.</text>
</comment>
<comment type="caution">
    <text evidence="3">Lacks the conserved His residues required for metal binding. Its function must therefore be different from the metal-dependent roles proposed for other family members.</text>
</comment>
<proteinExistence type="evidence at transcript level"/>
<sequence length="233" mass="25935">MITTRTARQCGQADYGWLQARYTFSFGHYFDPKLLGYASLRVLNQEVLAPGAAFQPRTYPKVDILNVILDGEAEYRDSEGNHVQASAGEALLLSTQPGVSYSEHNLSKDKPLTRMQLWLDACPQRENPLIQKLALNMGKQHLIASPEGAMGSLQLRQQVWLHHIVLDKGESANFQLHGPRTYLQSIHGKFHALTHHEEKAALTCGDGAFIRDEANITLVADSPLRALLIDLPV</sequence>
<dbReference type="EMBL" id="AE005174">
    <property type="protein sequence ID" value="AAG58239.1"/>
    <property type="molecule type" value="Genomic_DNA"/>
</dbReference>
<dbReference type="EMBL" id="BA000007">
    <property type="protein sequence ID" value="BAB37411.1"/>
    <property type="molecule type" value="Genomic_DNA"/>
</dbReference>
<dbReference type="PIR" id="C85972">
    <property type="entry name" value="C85972"/>
</dbReference>
<dbReference type="PIR" id="D91127">
    <property type="entry name" value="D91127"/>
</dbReference>
<dbReference type="RefSeq" id="NP_312015.1">
    <property type="nucleotide sequence ID" value="NC_002695.1"/>
</dbReference>
<dbReference type="RefSeq" id="WP_000633573.1">
    <property type="nucleotide sequence ID" value="NZ_VOAI01000009.1"/>
</dbReference>
<dbReference type="SMR" id="P58115"/>
<dbReference type="STRING" id="155864.Z4460"/>
<dbReference type="GeneID" id="916176"/>
<dbReference type="KEGG" id="ece:Z4460"/>
<dbReference type="KEGG" id="ecs:ECs_3988"/>
<dbReference type="PATRIC" id="fig|386585.9.peg.4162"/>
<dbReference type="eggNOG" id="COG1741">
    <property type="taxonomic scope" value="Bacteria"/>
</dbReference>
<dbReference type="HOGENOM" id="CLU_064194_1_0_6"/>
<dbReference type="OMA" id="KADYGWL"/>
<dbReference type="Proteomes" id="UP000000558">
    <property type="component" value="Chromosome"/>
</dbReference>
<dbReference type="Proteomes" id="UP000002519">
    <property type="component" value="Chromosome"/>
</dbReference>
<dbReference type="GO" id="GO:0005737">
    <property type="term" value="C:cytoplasm"/>
    <property type="evidence" value="ECO:0007669"/>
    <property type="project" value="UniProtKB-SubCell"/>
</dbReference>
<dbReference type="CDD" id="cd20311">
    <property type="entry name" value="cupin_Yhhw_C"/>
    <property type="match status" value="1"/>
</dbReference>
<dbReference type="Gene3D" id="2.60.120.10">
    <property type="entry name" value="Jelly Rolls"/>
    <property type="match status" value="2"/>
</dbReference>
<dbReference type="InterPro" id="IPR012093">
    <property type="entry name" value="Pirin"/>
</dbReference>
<dbReference type="InterPro" id="IPR003829">
    <property type="entry name" value="Pirin_N_dom"/>
</dbReference>
<dbReference type="InterPro" id="IPR041602">
    <property type="entry name" value="Quercetinase_C"/>
</dbReference>
<dbReference type="InterPro" id="IPR014710">
    <property type="entry name" value="RmlC-like_jellyroll"/>
</dbReference>
<dbReference type="InterPro" id="IPR011051">
    <property type="entry name" value="RmlC_Cupin_sf"/>
</dbReference>
<dbReference type="PANTHER" id="PTHR43212:SF2">
    <property type="entry name" value="PIRIN-LIKE PROTEIN YHAK"/>
    <property type="match status" value="1"/>
</dbReference>
<dbReference type="PANTHER" id="PTHR43212">
    <property type="entry name" value="QUERCETIN 2,3-DIOXYGENASE"/>
    <property type="match status" value="1"/>
</dbReference>
<dbReference type="Pfam" id="PF02678">
    <property type="entry name" value="Pirin"/>
    <property type="match status" value="1"/>
</dbReference>
<dbReference type="Pfam" id="PF17954">
    <property type="entry name" value="Pirin_C_2"/>
    <property type="match status" value="1"/>
</dbReference>
<dbReference type="PIRSF" id="PIRSF006232">
    <property type="entry name" value="Pirin"/>
    <property type="match status" value="1"/>
</dbReference>
<dbReference type="SUPFAM" id="SSF51182">
    <property type="entry name" value="RmlC-like cupins"/>
    <property type="match status" value="1"/>
</dbReference>
<keyword id="KW-0963">Cytoplasm</keyword>
<keyword id="KW-1185">Reference proteome</keyword>
<protein>
    <recommendedName>
        <fullName>Pirin-like protein YhaK</fullName>
    </recommendedName>
</protein>
<gene>
    <name type="primary">yhaK</name>
    <name type="ordered locus">Z4460</name>
    <name type="ordered locus">ECs3988</name>
</gene>
<evidence type="ECO:0000250" key="1"/>
<evidence type="ECO:0000269" key="2">
    <source>
    </source>
</evidence>
<evidence type="ECO:0000305" key="3"/>
<organism>
    <name type="scientific">Escherichia coli O157:H7</name>
    <dbReference type="NCBI Taxonomy" id="83334"/>
    <lineage>
        <taxon>Bacteria</taxon>
        <taxon>Pseudomonadati</taxon>
        <taxon>Pseudomonadota</taxon>
        <taxon>Gammaproteobacteria</taxon>
        <taxon>Enterobacterales</taxon>
        <taxon>Enterobacteriaceae</taxon>
        <taxon>Escherichia</taxon>
    </lineage>
</organism>
<accession>P58115</accession>